<protein>
    <recommendedName>
        <fullName evidence="1">Large ribosomal subunit protein uL3</fullName>
    </recommendedName>
    <alternativeName>
        <fullName evidence="3">50S ribosomal protein L3</fullName>
    </alternativeName>
</protein>
<reference key="1">
    <citation type="journal article" date="2004" name="Proc. Natl. Acad. Sci. U.S.A.">
        <title>The genome sequence of the probiotic intestinal bacterium Lactobacillus johnsonii NCC 533.</title>
        <authorList>
            <person name="Pridmore R.D."/>
            <person name="Berger B."/>
            <person name="Desiere F."/>
            <person name="Vilanova D."/>
            <person name="Barretto C."/>
            <person name="Pittet A.-C."/>
            <person name="Zwahlen M.-C."/>
            <person name="Rouvet M."/>
            <person name="Altermann E."/>
            <person name="Barrangou R."/>
            <person name="Mollet B."/>
            <person name="Mercenier A."/>
            <person name="Klaenhammer T."/>
            <person name="Arigoni F."/>
            <person name="Schell M.A."/>
        </authorList>
    </citation>
    <scope>NUCLEOTIDE SEQUENCE [LARGE SCALE GENOMIC DNA]</scope>
    <source>
        <strain>CNCM I-1225 / La1 / NCC 533</strain>
    </source>
</reference>
<proteinExistence type="inferred from homology"/>
<evidence type="ECO:0000255" key="1">
    <source>
        <dbReference type="HAMAP-Rule" id="MF_01325"/>
    </source>
</evidence>
<evidence type="ECO:0000256" key="2">
    <source>
        <dbReference type="SAM" id="MobiDB-lite"/>
    </source>
</evidence>
<evidence type="ECO:0000305" key="3"/>
<feature type="chain" id="PRO_0000241356" description="Large ribosomal subunit protein uL3">
    <location>
        <begin position="1"/>
        <end position="209"/>
    </location>
</feature>
<feature type="region of interest" description="Disordered" evidence="2">
    <location>
        <begin position="112"/>
        <end position="146"/>
    </location>
</feature>
<feature type="compositionally biased region" description="Polar residues" evidence="2">
    <location>
        <begin position="112"/>
        <end position="122"/>
    </location>
</feature>
<name>RL3_LACJO</name>
<dbReference type="EMBL" id="AE017198">
    <property type="protein sequence ID" value="AAS08325.1"/>
    <property type="molecule type" value="Genomic_DNA"/>
</dbReference>
<dbReference type="RefSeq" id="WP_003649467.1">
    <property type="nucleotide sequence ID" value="NC_005362.1"/>
</dbReference>
<dbReference type="SMR" id="Q74L88"/>
<dbReference type="GeneID" id="83569754"/>
<dbReference type="KEGG" id="ljo:LJ_0339"/>
<dbReference type="eggNOG" id="COG0087">
    <property type="taxonomic scope" value="Bacteria"/>
</dbReference>
<dbReference type="HOGENOM" id="CLU_044142_4_1_9"/>
<dbReference type="Proteomes" id="UP000000581">
    <property type="component" value="Chromosome"/>
</dbReference>
<dbReference type="GO" id="GO:0022625">
    <property type="term" value="C:cytosolic large ribosomal subunit"/>
    <property type="evidence" value="ECO:0007669"/>
    <property type="project" value="TreeGrafter"/>
</dbReference>
<dbReference type="GO" id="GO:0019843">
    <property type="term" value="F:rRNA binding"/>
    <property type="evidence" value="ECO:0007669"/>
    <property type="project" value="UniProtKB-UniRule"/>
</dbReference>
<dbReference type="GO" id="GO:0003735">
    <property type="term" value="F:structural constituent of ribosome"/>
    <property type="evidence" value="ECO:0007669"/>
    <property type="project" value="InterPro"/>
</dbReference>
<dbReference type="GO" id="GO:0006412">
    <property type="term" value="P:translation"/>
    <property type="evidence" value="ECO:0007669"/>
    <property type="project" value="UniProtKB-UniRule"/>
</dbReference>
<dbReference type="FunFam" id="2.40.30.10:FF:000004">
    <property type="entry name" value="50S ribosomal protein L3"/>
    <property type="match status" value="1"/>
</dbReference>
<dbReference type="FunFam" id="3.30.160.810:FF:000002">
    <property type="entry name" value="50S ribosomal protein L3"/>
    <property type="match status" value="1"/>
</dbReference>
<dbReference type="Gene3D" id="3.30.160.810">
    <property type="match status" value="1"/>
</dbReference>
<dbReference type="Gene3D" id="2.40.30.10">
    <property type="entry name" value="Translation factors"/>
    <property type="match status" value="1"/>
</dbReference>
<dbReference type="HAMAP" id="MF_01325_B">
    <property type="entry name" value="Ribosomal_uL3_B"/>
    <property type="match status" value="1"/>
</dbReference>
<dbReference type="InterPro" id="IPR000597">
    <property type="entry name" value="Ribosomal_uL3"/>
</dbReference>
<dbReference type="InterPro" id="IPR019927">
    <property type="entry name" value="Ribosomal_uL3_bac/org-type"/>
</dbReference>
<dbReference type="InterPro" id="IPR019926">
    <property type="entry name" value="Ribosomal_uL3_CS"/>
</dbReference>
<dbReference type="InterPro" id="IPR009000">
    <property type="entry name" value="Transl_B-barrel_sf"/>
</dbReference>
<dbReference type="NCBIfam" id="TIGR03625">
    <property type="entry name" value="L3_bact"/>
    <property type="match status" value="1"/>
</dbReference>
<dbReference type="PANTHER" id="PTHR11229">
    <property type="entry name" value="50S RIBOSOMAL PROTEIN L3"/>
    <property type="match status" value="1"/>
</dbReference>
<dbReference type="PANTHER" id="PTHR11229:SF16">
    <property type="entry name" value="LARGE RIBOSOMAL SUBUNIT PROTEIN UL3C"/>
    <property type="match status" value="1"/>
</dbReference>
<dbReference type="Pfam" id="PF00297">
    <property type="entry name" value="Ribosomal_L3"/>
    <property type="match status" value="1"/>
</dbReference>
<dbReference type="SUPFAM" id="SSF50447">
    <property type="entry name" value="Translation proteins"/>
    <property type="match status" value="1"/>
</dbReference>
<dbReference type="PROSITE" id="PS00474">
    <property type="entry name" value="RIBOSOMAL_L3"/>
    <property type="match status" value="1"/>
</dbReference>
<comment type="function">
    <text evidence="1">One of the primary rRNA binding proteins, it binds directly near the 3'-end of the 23S rRNA, where it nucleates assembly of the 50S subunit.</text>
</comment>
<comment type="subunit">
    <text evidence="1">Part of the 50S ribosomal subunit. Forms a cluster with proteins L14 and L19.</text>
</comment>
<comment type="similarity">
    <text evidence="1">Belongs to the universal ribosomal protein uL3 family.</text>
</comment>
<organism>
    <name type="scientific">Lactobacillus johnsonii (strain CNCM I-12250 / La1 / NCC 533)</name>
    <dbReference type="NCBI Taxonomy" id="257314"/>
    <lineage>
        <taxon>Bacteria</taxon>
        <taxon>Bacillati</taxon>
        <taxon>Bacillota</taxon>
        <taxon>Bacilli</taxon>
        <taxon>Lactobacillales</taxon>
        <taxon>Lactobacillaceae</taxon>
        <taxon>Lactobacillus</taxon>
    </lineage>
</organism>
<accession>Q74L88</accession>
<keyword id="KW-0687">Ribonucleoprotein</keyword>
<keyword id="KW-0689">Ribosomal protein</keyword>
<keyword id="KW-0694">RNA-binding</keyword>
<keyword id="KW-0699">rRNA-binding</keyword>
<sequence>MTKGILGRKVGMTQIFTKNGILVPVTVIEATPNVVLQVKTNESDGYEAVQVGYQDMREVLSNKPAKGHAAKAKTSPKRFIREIRDVELKDYEVGSEITVDSFSEGDVVDVTGTTRGHGTQGNIKRWGQSRGPETHGSRYHRIPGSMGSIINRVPKGKKLPGHMGGKKVTVQNLVIEKVVPEKNVLLIKGNVPGAKNSLIFVKSAAKAAK</sequence>
<gene>
    <name evidence="1" type="primary">rplC</name>
    <name type="ordered locus">LJ_0339</name>
</gene>